<reference key="1">
    <citation type="journal article" date="1985" name="Gene">
        <title>Genes for Bacillus megaterium small, acid-soluble spore proteins: nucleotide sequence of two genes and their expression during sporulation.</title>
        <authorList>
            <person name="Fliss E.R."/>
            <person name="Setlow P."/>
        </authorList>
    </citation>
    <scope>NUCLEOTIDE SEQUENCE [GENOMIC DNA]</scope>
</reference>
<evidence type="ECO:0000305" key="1"/>
<accession>P10571</accession>
<keyword id="KW-0238">DNA-binding</keyword>
<keyword id="KW-0749">Sporulation</keyword>
<name>SAS2_PRIMG</name>
<organism>
    <name type="scientific">Priestia megaterium</name>
    <name type="common">Bacillus megaterium</name>
    <dbReference type="NCBI Taxonomy" id="1404"/>
    <lineage>
        <taxon>Bacteria</taxon>
        <taxon>Bacillati</taxon>
        <taxon>Bacillota</taxon>
        <taxon>Bacilli</taxon>
        <taxon>Bacillales</taxon>
        <taxon>Bacillaceae</taxon>
        <taxon>Priestia</taxon>
    </lineage>
</organism>
<comment type="function">
    <text>SASP are bound to spore DNA. They are double-stranded DNA-binding proteins that cause DNA to change to an a-like conformation. They protect the DNA backbone from chemical and enzymatic cleavage and are thus involved in dormant spore's high resistance to UV light.</text>
</comment>
<comment type="miscellaneous">
    <text>SASP are degraded in the first minutes of spore germination and provide amino acids for both new protein synthesis and metabolism.</text>
</comment>
<comment type="similarity">
    <text evidence="1">Belongs to the alpha/beta-type SASP family.</text>
</comment>
<sequence>MANNKSSNNNELLVYGAEQAIDQMKYEIASEFGVNLGADTTARANGSVGGEITKRLVQLAEQQLGGGRSKTTL</sequence>
<feature type="chain" id="PRO_0000196295" description="Small, acid-soluble spore protein C2">
    <location>
        <begin position="1"/>
        <end position="73"/>
    </location>
</feature>
<feature type="site" description="Cleavage; by spore protease">
    <location>
        <begin position="27"/>
        <end position="28"/>
    </location>
</feature>
<dbReference type="EMBL" id="M10920">
    <property type="status" value="NOT_ANNOTATED_CDS"/>
    <property type="molecule type" value="Genomic_DNA"/>
</dbReference>
<dbReference type="PIR" id="B24033">
    <property type="entry name" value="B24033"/>
</dbReference>
<dbReference type="SMR" id="P10571"/>
<dbReference type="GO" id="GO:0003690">
    <property type="term" value="F:double-stranded DNA binding"/>
    <property type="evidence" value="ECO:0007669"/>
    <property type="project" value="InterPro"/>
</dbReference>
<dbReference type="GO" id="GO:0006265">
    <property type="term" value="P:DNA topological change"/>
    <property type="evidence" value="ECO:0007669"/>
    <property type="project" value="InterPro"/>
</dbReference>
<dbReference type="GO" id="GO:0030435">
    <property type="term" value="P:sporulation resulting in formation of a cellular spore"/>
    <property type="evidence" value="ECO:0007669"/>
    <property type="project" value="UniProtKB-KW"/>
</dbReference>
<dbReference type="Gene3D" id="6.10.10.80">
    <property type="entry name" value="Small, acid-soluble spore protein, alpha/beta type-like"/>
    <property type="match status" value="1"/>
</dbReference>
<dbReference type="InterPro" id="IPR001448">
    <property type="entry name" value="SASP_alpha/beta-type"/>
</dbReference>
<dbReference type="InterPro" id="IPR018126">
    <property type="entry name" value="SASP_alpha/beta-type_CS"/>
</dbReference>
<dbReference type="InterPro" id="IPR050847">
    <property type="entry name" value="SASP_DNA-binding"/>
</dbReference>
<dbReference type="InterPro" id="IPR038300">
    <property type="entry name" value="SASP_sf_alpha/beta"/>
</dbReference>
<dbReference type="PANTHER" id="PTHR36107">
    <property type="entry name" value="SMALL, ACID-SOLUBLE SPORE PROTEIN A"/>
    <property type="match status" value="1"/>
</dbReference>
<dbReference type="PANTHER" id="PTHR36107:SF1">
    <property type="entry name" value="SMALL, ACID-SOLUBLE SPORE PROTEIN A"/>
    <property type="match status" value="1"/>
</dbReference>
<dbReference type="Pfam" id="PF00269">
    <property type="entry name" value="SASP"/>
    <property type="match status" value="1"/>
</dbReference>
<dbReference type="PROSITE" id="PS00304">
    <property type="entry name" value="SASP_1"/>
    <property type="match status" value="1"/>
</dbReference>
<dbReference type="PROSITE" id="PS00684">
    <property type="entry name" value="SASP_2"/>
    <property type="match status" value="1"/>
</dbReference>
<gene>
    <name type="primary">SASP-C2</name>
</gene>
<protein>
    <recommendedName>
        <fullName>Small, acid-soluble spore protein C2</fullName>
        <shortName>SASP</shortName>
    </recommendedName>
</protein>
<proteinExistence type="inferred from homology"/>